<comment type="function">
    <text evidence="4">Mediates the incorporation of phosphate into starch-like alpha-glucan, mostly at the C-6 position of glucose units. Acts as an overall regulator of starch mobilization. Required for starch degradation, suggesting that the phosphate content of starch regulates its degradability.</text>
</comment>
<comment type="catalytic activity">
    <reaction evidence="4">
        <text>[(1-&gt;4)-alpha-D-glucosyl](n) + n ATP + n H2O = [(1-&gt;4)-6-phospho-alpha-D-glucosyl](n) + n AMP + n phosphate + 2n H(+)</text>
        <dbReference type="Rhea" id="RHEA:11668"/>
        <dbReference type="Rhea" id="RHEA-COMP:9584"/>
        <dbReference type="Rhea" id="RHEA-COMP:12983"/>
        <dbReference type="ChEBI" id="CHEBI:15377"/>
        <dbReference type="ChEBI" id="CHEBI:15378"/>
        <dbReference type="ChEBI" id="CHEBI:15444"/>
        <dbReference type="ChEBI" id="CHEBI:30616"/>
        <dbReference type="ChEBI" id="CHEBI:43474"/>
        <dbReference type="ChEBI" id="CHEBI:134068"/>
        <dbReference type="ChEBI" id="CHEBI:456215"/>
        <dbReference type="EC" id="2.7.9.4"/>
    </reaction>
    <physiologicalReaction direction="left-to-right" evidence="4">
        <dbReference type="Rhea" id="RHEA:11669"/>
    </physiologicalReaction>
</comment>
<comment type="cofactor">
    <cofactor evidence="2">
        <name>Mg(2+)</name>
        <dbReference type="ChEBI" id="CHEBI:18420"/>
    </cofactor>
</comment>
<comment type="subunit">
    <text evidence="2">Homodimer.</text>
</comment>
<comment type="interaction">
    <interactant intactId="EBI-2355356">
        <id>Q9SAC6</id>
    </interactant>
    <interactant intactId="EBI-4426649">
        <id>Q17TI5</id>
        <label>BRX</label>
    </interactant>
    <organismsDiffer>false</organismsDiffer>
    <experiments>3</experiments>
</comment>
<comment type="interaction">
    <interactant intactId="EBI-2355356">
        <id>Q9SAC6</id>
    </interactant>
    <interactant intactId="EBI-15219982">
        <id>Q8VYF7</id>
        <label>WHY2</label>
    </interactant>
    <organismsDiffer>false</organismsDiffer>
    <experiments>3</experiments>
</comment>
<comment type="subcellular location">
    <subcellularLocation>
        <location evidence="4">Plastid</location>
        <location evidence="4">Chloroplast</location>
    </subcellularLocation>
    <text evidence="4">Starch granules.</text>
</comment>
<comment type="developmental stage">
    <text evidence="4">The level of protein does not vary in a circadian rhythm and is stable throughout day and night (at protein level).</text>
</comment>
<comment type="domain">
    <text evidence="2">The N-terminal domain contains the alpha-glucan binding site, the central domain the pyrophosphate/phosphate carrier histidine, and the C-terminal domain the ATP binding site.</text>
</comment>
<comment type="miscellaneous">
    <text evidence="1">The reaction takes place in three steps, mediated by a phosphocarrier histidine residue located on the surface of the central domain. The two first partial reactions are catalyzed at an active site located on the C-terminal domain, and the third partial reaction is catalyzed at an active site located on the N-terminal domain. For catalytic turnover, the central domain swivels from the concave surface of the C-terminal domain to that of the N-terminal domain (By similarity).</text>
</comment>
<comment type="similarity">
    <text evidence="6">Belongs to the PEP-utilizing enzyme family.</text>
</comment>
<comment type="sequence caution" evidence="6">
    <conflict type="erroneous gene model prediction">
        <sequence resource="EMBL-CDS" id="AAD31337"/>
    </conflict>
</comment>
<comment type="sequence caution" evidence="6">
    <conflict type="erroneous gene model prediction">
        <sequence resource="EMBL-CDS" id="AAF17665"/>
    </conflict>
</comment>
<comment type="sequence caution" evidence="6">
    <conflict type="erroneous initiation">
        <sequence resource="EMBL-CDS" id="AAK49609"/>
    </conflict>
</comment>
<comment type="sequence caution" evidence="6">
    <conflict type="erroneous initiation">
        <sequence resource="EMBL-CDS" id="AAK96541"/>
    </conflict>
</comment>
<sequence length="1399" mass="156582">MSNSVVHNLLNRGLIRPLNFEHQNKLNSSVYQTSTANPALGKIGRSKLYGKGLKQAGRSLVTETGGRPLSFVPRAVLAMDPQAAEKFSLDGNIDLLVEVTSTTVREVNIQIAYTSDTLFLHWGAILDNKENWVLPSRSPDRTQNFKNSALRTPFVKSGGNSHLKLEIDDPAIHAIEFLIFDESRNKWYKNNGQNFHINLPTERNVKQNVSVPEDLVQIQAYLRWERKGKQMYNPEKEKEEYEAARTELREEMMRGASVEDLRAKLLKKDNSNESPKSNGTSSSGREEKKKVSKQPERKKNYNTDKIQRKGRDLTKLIYKHVADFVEPESKSSSEPRSLTTLEIYAKAKEEQETTPVFSKKTFKLEGSAILVFVTKLSGKTKIHVATDFKEPVTLHWALSQKGGEWLDPPSDILPPNSLPVRGAVDTKLTITSTDLPSPVQTFELEIEGDSYKGMPFVLNAGERWIKNNDSDFYVDFAKEEKHVQKDYGDGKGTAKHLLDKIADLESEAQKSFMHRFNIAADLVDEAKSAGQLGFAGILVWMRFMATRQLVWNKNYNVKPREISKAQDRLTDLLQDVYASYPEYRELLRMIMSTVGRGGEGDVGQRIRDEILVIQRKNDCKGGIMEEWHQKLHNNTSPDDVVICQALMDYIKSDFDLSVYWKTLNDNGITKERLLSYDRAIHSEPNFRGEQKDGLLRDLGHYMRTLKAVHSGADLESAIQNCMGYQDDGEGFMVGVQINPVSGLPSGYPDLLRFVLEHVEEKNVEPLLEGLLEARQELRPLLLKSHDRLKDLLFLDLALDSTVRTAIERGYEQLNDAGPEKIMYFISLVLENLALSSDDNEDLIYCLKGWQFALDMCKSKKDHWALYAKSVLDRSRLALASKAERYLEILQPSAEYLGSCLGVDQSAVSIFTEEIIRAGSAAALSSLVNRLDPVLRKTANLGSWQVISPVEVVGYVIVVDELLTVQNKTYDRPTIIVANRVRGEEEIPDGAVAVLTPDMPDVLSHVSVRARNGKICFATCFDSGILSDLQGKDGKLLSLQPTSADVVYKEVNDSELSSPSSDNLEDAPPSISLVKKQFAGRYAISSEEFTSDLVGAKSRNIGYLKGKVPSWVGIPTSVALPFGVFEKVISEKANQAVNDKLLVLKKTLDEGDQGALKEIRQTLLGLVAPPELVEELKSTMKSSDMPWPGDEGEQRWEQAWAAIKKVWASKWNERAYFSTRKVKLDHDYLCMAVLVQEVINADYAFVIHTTNPSSGDSSEIYAEVVKGLGETLVGAYPGRSLSFICKKNNLDSPLVLGYPSKPIGLFIRRSIIFRSDSNGEDLEGYAGAGLYDSVPMDEEDQVVLDYTTDPLITDLSFQKKVLSDIARAGDAIEKLYGTAQDIEGVIRDGKLYVVQTRPQV</sequence>
<name>GWD1_ARATH</name>
<proteinExistence type="evidence at protein level"/>
<keyword id="KW-0007">Acetylation</keyword>
<keyword id="KW-0067">ATP-binding</keyword>
<keyword id="KW-0119">Carbohydrate metabolism</keyword>
<keyword id="KW-0150">Chloroplast</keyword>
<keyword id="KW-0418">Kinase</keyword>
<keyword id="KW-0460">Magnesium</keyword>
<keyword id="KW-0479">Metal-binding</keyword>
<keyword id="KW-0547">Nucleotide-binding</keyword>
<keyword id="KW-0934">Plastid</keyword>
<keyword id="KW-1185">Reference proteome</keyword>
<keyword id="KW-0808">Transferase</keyword>
<keyword id="KW-0809">Transit peptide</keyword>
<gene>
    <name evidence="6" type="primary">GWD1</name>
    <name evidence="5" type="synonym">R1</name>
    <name evidence="5" type="synonym">SEX1</name>
    <name evidence="7" type="ordered locus">At1g10760</name>
    <name evidence="9" type="ORF">F20B24.19</name>
    <name evidence="8" type="ORF">T16B5.10</name>
</gene>
<evidence type="ECO:0000250" key="1"/>
<evidence type="ECO:0000250" key="2">
    <source>
        <dbReference type="UniProtKB" id="P23538"/>
    </source>
</evidence>
<evidence type="ECO:0000256" key="3">
    <source>
        <dbReference type="SAM" id="MobiDB-lite"/>
    </source>
</evidence>
<evidence type="ECO:0000269" key="4">
    <source>
    </source>
</evidence>
<evidence type="ECO:0000303" key="5">
    <source>
    </source>
</evidence>
<evidence type="ECO:0000305" key="6"/>
<evidence type="ECO:0000312" key="7">
    <source>
        <dbReference type="Araport" id="AT1G10760"/>
    </source>
</evidence>
<evidence type="ECO:0000312" key="8">
    <source>
        <dbReference type="EMBL" id="AAD31337.1"/>
    </source>
</evidence>
<evidence type="ECO:0000312" key="9">
    <source>
        <dbReference type="EMBL" id="AAF17665.1"/>
    </source>
</evidence>
<evidence type="ECO:0007744" key="10">
    <source>
    </source>
</evidence>
<accession>Q9SAC6</accession>
<accession>Q93VD0</accession>
<accession>Q940Z0</accession>
<accession>Q9FPP2</accession>
<accession>Q9SGX4</accession>
<reference key="1">
    <citation type="journal article" date="2001" name="Plant Cell">
        <title>The Arabidopsis sex1 mutant is defective in the R1 protein, a general regulator of starch degradation in plants, and not in the chloroplast hexose transporter.</title>
        <authorList>
            <person name="Yu T.-S."/>
            <person name="Kofler H."/>
            <person name="Haeusler R.E."/>
            <person name="Hille D."/>
            <person name="Fluegge U.-I."/>
            <person name="Zeeman S.C."/>
            <person name="Smith A.M."/>
            <person name="Kossmann J."/>
            <person name="Lloyd J."/>
            <person name="Ritte G."/>
            <person name="Steup M."/>
            <person name="Lue W.-L."/>
            <person name="Chen J."/>
            <person name="Weber A."/>
        </authorList>
    </citation>
    <scope>NUCLEOTIDE SEQUENCE [MRNA]</scope>
    <scope>FUNCTION</scope>
    <scope>CATALYTIC ACTIVITY</scope>
    <scope>SUBCELLULAR LOCATION</scope>
    <scope>DEVELOPMENTAL STAGE</scope>
    <scope>MUTAGENESIS OF GLY-1268</scope>
</reference>
<reference key="2">
    <citation type="journal article" date="2000" name="Nature">
        <title>Sequence and analysis of chromosome 1 of the plant Arabidopsis thaliana.</title>
        <authorList>
            <person name="Theologis A."/>
            <person name="Ecker J.R."/>
            <person name="Palm C.J."/>
            <person name="Federspiel N.A."/>
            <person name="Kaul S."/>
            <person name="White O."/>
            <person name="Alonso J."/>
            <person name="Altafi H."/>
            <person name="Araujo R."/>
            <person name="Bowman C.L."/>
            <person name="Brooks S.Y."/>
            <person name="Buehler E."/>
            <person name="Chan A."/>
            <person name="Chao Q."/>
            <person name="Chen H."/>
            <person name="Cheuk R.F."/>
            <person name="Chin C.W."/>
            <person name="Chung M.K."/>
            <person name="Conn L."/>
            <person name="Conway A.B."/>
            <person name="Conway A.R."/>
            <person name="Creasy T.H."/>
            <person name="Dewar K."/>
            <person name="Dunn P."/>
            <person name="Etgu P."/>
            <person name="Feldblyum T.V."/>
            <person name="Feng J.-D."/>
            <person name="Fong B."/>
            <person name="Fujii C.Y."/>
            <person name="Gill J.E."/>
            <person name="Goldsmith A.D."/>
            <person name="Haas B."/>
            <person name="Hansen N.F."/>
            <person name="Hughes B."/>
            <person name="Huizar L."/>
            <person name="Hunter J.L."/>
            <person name="Jenkins J."/>
            <person name="Johnson-Hopson C."/>
            <person name="Khan S."/>
            <person name="Khaykin E."/>
            <person name="Kim C.J."/>
            <person name="Koo H.L."/>
            <person name="Kremenetskaia I."/>
            <person name="Kurtz D.B."/>
            <person name="Kwan A."/>
            <person name="Lam B."/>
            <person name="Langin-Hooper S."/>
            <person name="Lee A."/>
            <person name="Lee J.M."/>
            <person name="Lenz C.A."/>
            <person name="Li J.H."/>
            <person name="Li Y.-P."/>
            <person name="Lin X."/>
            <person name="Liu S.X."/>
            <person name="Liu Z.A."/>
            <person name="Luros J.S."/>
            <person name="Maiti R."/>
            <person name="Marziali A."/>
            <person name="Militscher J."/>
            <person name="Miranda M."/>
            <person name="Nguyen M."/>
            <person name="Nierman W.C."/>
            <person name="Osborne B.I."/>
            <person name="Pai G."/>
            <person name="Peterson J."/>
            <person name="Pham P.K."/>
            <person name="Rizzo M."/>
            <person name="Rooney T."/>
            <person name="Rowley D."/>
            <person name="Sakano H."/>
            <person name="Salzberg S.L."/>
            <person name="Schwartz J.R."/>
            <person name="Shinn P."/>
            <person name="Southwick A.M."/>
            <person name="Sun H."/>
            <person name="Tallon L.J."/>
            <person name="Tambunga G."/>
            <person name="Toriumi M.J."/>
            <person name="Town C.D."/>
            <person name="Utterback T."/>
            <person name="Van Aken S."/>
            <person name="Vaysberg M."/>
            <person name="Vysotskaia V.S."/>
            <person name="Walker M."/>
            <person name="Wu D."/>
            <person name="Yu G."/>
            <person name="Fraser C.M."/>
            <person name="Venter J.C."/>
            <person name="Davis R.W."/>
        </authorList>
    </citation>
    <scope>NUCLEOTIDE SEQUENCE [LARGE SCALE GENOMIC DNA]</scope>
    <source>
        <strain>cv. Columbia</strain>
    </source>
</reference>
<reference key="3">
    <citation type="journal article" date="2017" name="Plant J.">
        <title>Araport11: a complete reannotation of the Arabidopsis thaliana reference genome.</title>
        <authorList>
            <person name="Cheng C.Y."/>
            <person name="Krishnakumar V."/>
            <person name="Chan A.P."/>
            <person name="Thibaud-Nissen F."/>
            <person name="Schobel S."/>
            <person name="Town C.D."/>
        </authorList>
    </citation>
    <scope>GENOME REANNOTATION</scope>
    <source>
        <strain>cv. Columbia</strain>
    </source>
</reference>
<reference key="4">
    <citation type="journal article" date="2003" name="Science">
        <title>Empirical analysis of transcriptional activity in the Arabidopsis genome.</title>
        <authorList>
            <person name="Yamada K."/>
            <person name="Lim J."/>
            <person name="Dale J.M."/>
            <person name="Chen H."/>
            <person name="Shinn P."/>
            <person name="Palm C.J."/>
            <person name="Southwick A.M."/>
            <person name="Wu H.C."/>
            <person name="Kim C.J."/>
            <person name="Nguyen M."/>
            <person name="Pham P.K."/>
            <person name="Cheuk R.F."/>
            <person name="Karlin-Newmann G."/>
            <person name="Liu S.X."/>
            <person name="Lam B."/>
            <person name="Sakano H."/>
            <person name="Wu T."/>
            <person name="Yu G."/>
            <person name="Miranda M."/>
            <person name="Quach H.L."/>
            <person name="Tripp M."/>
            <person name="Chang C.H."/>
            <person name="Lee J.M."/>
            <person name="Toriumi M.J."/>
            <person name="Chan M.M."/>
            <person name="Tang C.C."/>
            <person name="Onodera C.S."/>
            <person name="Deng J.M."/>
            <person name="Akiyama K."/>
            <person name="Ansari Y."/>
            <person name="Arakawa T."/>
            <person name="Banh J."/>
            <person name="Banno F."/>
            <person name="Bowser L."/>
            <person name="Brooks S.Y."/>
            <person name="Carninci P."/>
            <person name="Chao Q."/>
            <person name="Choy N."/>
            <person name="Enju A."/>
            <person name="Goldsmith A.D."/>
            <person name="Gurjal M."/>
            <person name="Hansen N.F."/>
            <person name="Hayashizaki Y."/>
            <person name="Johnson-Hopson C."/>
            <person name="Hsuan V.W."/>
            <person name="Iida K."/>
            <person name="Karnes M."/>
            <person name="Khan S."/>
            <person name="Koesema E."/>
            <person name="Ishida J."/>
            <person name="Jiang P.X."/>
            <person name="Jones T."/>
            <person name="Kawai J."/>
            <person name="Kamiya A."/>
            <person name="Meyers C."/>
            <person name="Nakajima M."/>
            <person name="Narusaka M."/>
            <person name="Seki M."/>
            <person name="Sakurai T."/>
            <person name="Satou M."/>
            <person name="Tamse R."/>
            <person name="Vaysberg M."/>
            <person name="Wallender E.K."/>
            <person name="Wong C."/>
            <person name="Yamamura Y."/>
            <person name="Yuan S."/>
            <person name="Shinozaki K."/>
            <person name="Davis R.W."/>
            <person name="Theologis A."/>
            <person name="Ecker J.R."/>
        </authorList>
    </citation>
    <scope>NUCLEOTIDE SEQUENCE [LARGE SCALE MRNA] OF 1220-1399</scope>
    <source>
        <strain>cv. Columbia</strain>
    </source>
</reference>
<reference key="5">
    <citation type="journal article" date="2012" name="Mol. Cell. Proteomics">
        <title>Comparative large-scale characterisation of plant vs. mammal proteins reveals similar and idiosyncratic N-alpha acetylation features.</title>
        <authorList>
            <person name="Bienvenut W.V."/>
            <person name="Sumpton D."/>
            <person name="Martinez A."/>
            <person name="Lilla S."/>
            <person name="Espagne C."/>
            <person name="Meinnel T."/>
            <person name="Giglione C."/>
        </authorList>
    </citation>
    <scope>ACETYLATION [LARGE SCALE ANALYSIS] AT VAL-76</scope>
    <scope>CLEAVAGE OF TRANSIT PEPTIDE [LARGE SCALE ANALYSIS] AFTER ALA-75</scope>
    <scope>IDENTIFICATION BY MASS SPECTROMETRY [LARGE SCALE ANALYSIS]</scope>
</reference>
<organism>
    <name type="scientific">Arabidopsis thaliana</name>
    <name type="common">Mouse-ear cress</name>
    <dbReference type="NCBI Taxonomy" id="3702"/>
    <lineage>
        <taxon>Eukaryota</taxon>
        <taxon>Viridiplantae</taxon>
        <taxon>Streptophyta</taxon>
        <taxon>Embryophyta</taxon>
        <taxon>Tracheophyta</taxon>
        <taxon>Spermatophyta</taxon>
        <taxon>Magnoliopsida</taxon>
        <taxon>eudicotyledons</taxon>
        <taxon>Gunneridae</taxon>
        <taxon>Pentapetalae</taxon>
        <taxon>rosids</taxon>
        <taxon>malvids</taxon>
        <taxon>Brassicales</taxon>
        <taxon>Brassicaceae</taxon>
        <taxon>Camelineae</taxon>
        <taxon>Arabidopsis</taxon>
    </lineage>
</organism>
<dbReference type="EC" id="2.7.9.4" evidence="4"/>
<dbReference type="EMBL" id="AF312027">
    <property type="protein sequence ID" value="AAG47821.1"/>
    <property type="molecule type" value="mRNA"/>
</dbReference>
<dbReference type="EMBL" id="AC007354">
    <property type="protein sequence ID" value="AAD31337.1"/>
    <property type="status" value="ALT_SEQ"/>
    <property type="molecule type" value="Genomic_DNA"/>
</dbReference>
<dbReference type="EMBL" id="AC009398">
    <property type="protein sequence ID" value="AAF17665.1"/>
    <property type="status" value="ALT_SEQ"/>
    <property type="molecule type" value="Genomic_DNA"/>
</dbReference>
<dbReference type="EMBL" id="CP002684">
    <property type="protein sequence ID" value="AEE28643.1"/>
    <property type="molecule type" value="Genomic_DNA"/>
</dbReference>
<dbReference type="EMBL" id="CP002684">
    <property type="protein sequence ID" value="ANM58154.1"/>
    <property type="molecule type" value="Genomic_DNA"/>
</dbReference>
<dbReference type="EMBL" id="CP002684">
    <property type="protein sequence ID" value="ANM58155.1"/>
    <property type="molecule type" value="Genomic_DNA"/>
</dbReference>
<dbReference type="EMBL" id="AF372893">
    <property type="protein sequence ID" value="AAK49609.1"/>
    <property type="status" value="ALT_INIT"/>
    <property type="molecule type" value="mRNA"/>
</dbReference>
<dbReference type="EMBL" id="AY052349">
    <property type="protein sequence ID" value="AAK96541.1"/>
    <property type="status" value="ALT_INIT"/>
    <property type="molecule type" value="mRNA"/>
</dbReference>
<dbReference type="EMBL" id="AY057722">
    <property type="protein sequence ID" value="AAL15352.1"/>
    <property type="molecule type" value="mRNA"/>
</dbReference>
<dbReference type="PIR" id="B86241">
    <property type="entry name" value="B86241"/>
</dbReference>
<dbReference type="RefSeq" id="NP_001318975.1">
    <property type="nucleotide sequence ID" value="NM_001331926.1"/>
</dbReference>
<dbReference type="RefSeq" id="NP_001320611.1">
    <property type="nucleotide sequence ID" value="NM_001331927.1"/>
</dbReference>
<dbReference type="RefSeq" id="NP_563877.1">
    <property type="nucleotide sequence ID" value="NM_100952.4"/>
</dbReference>
<dbReference type="SMR" id="Q9SAC6"/>
<dbReference type="BioGRID" id="22859">
    <property type="interactions" value="8"/>
</dbReference>
<dbReference type="FunCoup" id="Q9SAC6">
    <property type="interactions" value="840"/>
</dbReference>
<dbReference type="IntAct" id="Q9SAC6">
    <property type="interactions" value="3"/>
</dbReference>
<dbReference type="MINT" id="Q9SAC6"/>
<dbReference type="STRING" id="3702.Q9SAC6"/>
<dbReference type="CAZy" id="CBM45">
    <property type="family name" value="Carbohydrate-Binding Module Family 45"/>
</dbReference>
<dbReference type="iPTMnet" id="Q9SAC6"/>
<dbReference type="PaxDb" id="3702-AT1G10760.1"/>
<dbReference type="ProteomicsDB" id="247326"/>
<dbReference type="EnsemblPlants" id="AT1G10760.1">
    <property type="protein sequence ID" value="AT1G10760.1"/>
    <property type="gene ID" value="AT1G10760"/>
</dbReference>
<dbReference type="EnsemblPlants" id="AT1G10760.2">
    <property type="protein sequence ID" value="AT1G10760.2"/>
    <property type="gene ID" value="AT1G10760"/>
</dbReference>
<dbReference type="EnsemblPlants" id="AT1G10760.3">
    <property type="protein sequence ID" value="AT1G10760.3"/>
    <property type="gene ID" value="AT1G10760"/>
</dbReference>
<dbReference type="GeneID" id="837619"/>
<dbReference type="Gramene" id="AT1G10760.1">
    <property type="protein sequence ID" value="AT1G10760.1"/>
    <property type="gene ID" value="AT1G10760"/>
</dbReference>
<dbReference type="Gramene" id="AT1G10760.2">
    <property type="protein sequence ID" value="AT1G10760.2"/>
    <property type="gene ID" value="AT1G10760"/>
</dbReference>
<dbReference type="Gramene" id="AT1G10760.3">
    <property type="protein sequence ID" value="AT1G10760.3"/>
    <property type="gene ID" value="AT1G10760"/>
</dbReference>
<dbReference type="KEGG" id="ath:AT1G10760"/>
<dbReference type="Araport" id="AT1G10760"/>
<dbReference type="TAIR" id="AT1G10760">
    <property type="gene designation" value="SEX1"/>
</dbReference>
<dbReference type="eggNOG" id="ENOG502QQ6R">
    <property type="taxonomic scope" value="Eukaryota"/>
</dbReference>
<dbReference type="HOGENOM" id="CLU_002399_1_0_1"/>
<dbReference type="InParanoid" id="Q9SAC6"/>
<dbReference type="OMA" id="IFVWIRF"/>
<dbReference type="OrthoDB" id="6123450at2759"/>
<dbReference type="PhylomeDB" id="Q9SAC6"/>
<dbReference type="BioCyc" id="ARA:AT1G10760-MONOMER"/>
<dbReference type="BioCyc" id="MetaCyc:AT1G10760-MONOMER"/>
<dbReference type="BRENDA" id="2.7.9.4">
    <property type="organism ID" value="399"/>
</dbReference>
<dbReference type="PRO" id="PR:Q9SAC6"/>
<dbReference type="Proteomes" id="UP000006548">
    <property type="component" value="Chromosome 1"/>
</dbReference>
<dbReference type="ExpressionAtlas" id="Q9SAC6">
    <property type="expression patterns" value="baseline and differential"/>
</dbReference>
<dbReference type="GO" id="GO:0009507">
    <property type="term" value="C:chloroplast"/>
    <property type="evidence" value="ECO:0007005"/>
    <property type="project" value="TAIR"/>
</dbReference>
<dbReference type="GO" id="GO:0009941">
    <property type="term" value="C:chloroplast envelope"/>
    <property type="evidence" value="ECO:0007005"/>
    <property type="project" value="TAIR"/>
</dbReference>
<dbReference type="GO" id="GO:0009570">
    <property type="term" value="C:chloroplast stroma"/>
    <property type="evidence" value="ECO:0007005"/>
    <property type="project" value="TAIR"/>
</dbReference>
<dbReference type="GO" id="GO:0005739">
    <property type="term" value="C:mitochondrion"/>
    <property type="evidence" value="ECO:0007005"/>
    <property type="project" value="TAIR"/>
</dbReference>
<dbReference type="GO" id="GO:0050521">
    <property type="term" value="F:alpha-glucan, water dikinase activity"/>
    <property type="evidence" value="ECO:0000315"/>
    <property type="project" value="TAIR"/>
</dbReference>
<dbReference type="GO" id="GO:0005524">
    <property type="term" value="F:ATP binding"/>
    <property type="evidence" value="ECO:0007669"/>
    <property type="project" value="UniProtKB-KW"/>
</dbReference>
<dbReference type="GO" id="GO:0046872">
    <property type="term" value="F:metal ion binding"/>
    <property type="evidence" value="ECO:0007669"/>
    <property type="project" value="UniProtKB-KW"/>
</dbReference>
<dbReference type="GO" id="GO:0003729">
    <property type="term" value="F:mRNA binding"/>
    <property type="evidence" value="ECO:0000314"/>
    <property type="project" value="TAIR"/>
</dbReference>
<dbReference type="GO" id="GO:0009631">
    <property type="term" value="P:cold acclimation"/>
    <property type="evidence" value="ECO:0000315"/>
    <property type="project" value="TAIR"/>
</dbReference>
<dbReference type="GO" id="GO:0009610">
    <property type="term" value="P:response to symbiotic fungus"/>
    <property type="evidence" value="ECO:0000270"/>
    <property type="project" value="TAIR"/>
</dbReference>
<dbReference type="GO" id="GO:0005983">
    <property type="term" value="P:starch catabolic process"/>
    <property type="evidence" value="ECO:0000315"/>
    <property type="project" value="TAIR"/>
</dbReference>
<dbReference type="FunFam" id="3.30.470.20:FF:000070">
    <property type="entry name" value="Alpha-glucan water dikinase 2"/>
    <property type="match status" value="1"/>
</dbReference>
<dbReference type="FunFam" id="3.30.1490.20:FF:000033">
    <property type="entry name" value="alpha-glucan water dikinase, chloroplastic isoform X2"/>
    <property type="match status" value="1"/>
</dbReference>
<dbReference type="Gene3D" id="3.30.1490.20">
    <property type="entry name" value="ATP-grasp fold, A domain"/>
    <property type="match status" value="1"/>
</dbReference>
<dbReference type="Gene3D" id="3.30.470.20">
    <property type="entry name" value="ATP-grasp fold, B domain"/>
    <property type="match status" value="1"/>
</dbReference>
<dbReference type="InterPro" id="IPR013815">
    <property type="entry name" value="ATP_grasp_subdomain_1"/>
</dbReference>
<dbReference type="InterPro" id="IPR055495">
    <property type="entry name" value="CWD_DUF7067"/>
</dbReference>
<dbReference type="InterPro" id="IPR056301">
    <property type="entry name" value="GWD-like_N_Ig"/>
</dbReference>
<dbReference type="InterPro" id="IPR054481">
    <property type="entry name" value="GWD1_pHisD"/>
</dbReference>
<dbReference type="InterPro" id="IPR002192">
    <property type="entry name" value="PPDK_AMP/ATP-bd"/>
</dbReference>
<dbReference type="PANTHER" id="PTHR46999:SF1">
    <property type="entry name" value="ALPHA-GLUCAN WATER DIKINASE 1, CHLOROPLASTIC"/>
    <property type="match status" value="1"/>
</dbReference>
<dbReference type="PANTHER" id="PTHR46999">
    <property type="entry name" value="ALPHA-GLUCAN WATER DIKINASE 1, CHLOROPLASTIC-RELATED"/>
    <property type="match status" value="1"/>
</dbReference>
<dbReference type="Pfam" id="PF23229">
    <property type="entry name" value="DUF7067"/>
    <property type="match status" value="1"/>
</dbReference>
<dbReference type="Pfam" id="PF22973">
    <property type="entry name" value="GWD1_pHisD"/>
    <property type="match status" value="1"/>
</dbReference>
<dbReference type="Pfam" id="PF23166">
    <property type="entry name" value="Ig_N_CWD1"/>
    <property type="match status" value="2"/>
</dbReference>
<dbReference type="Pfam" id="PF01326">
    <property type="entry name" value="PPDK_N"/>
    <property type="match status" value="1"/>
</dbReference>
<dbReference type="SUPFAM" id="SSF56059">
    <property type="entry name" value="Glutathione synthetase ATP-binding domain-like"/>
    <property type="match status" value="1"/>
</dbReference>
<feature type="transit peptide" description="Chloroplast" evidence="10">
    <location>
        <begin position="1"/>
        <end position="75"/>
    </location>
</feature>
<feature type="chain" id="PRO_0000023565" description="Alpha-glucan water dikinase 1, chloroplastic">
    <location>
        <begin position="76"/>
        <end position="1399"/>
    </location>
</feature>
<feature type="region of interest" description="Disordered" evidence="3">
    <location>
        <begin position="265"/>
        <end position="306"/>
    </location>
</feature>
<feature type="compositionally biased region" description="Polar residues" evidence="3">
    <location>
        <begin position="272"/>
        <end position="283"/>
    </location>
</feature>
<feature type="compositionally biased region" description="Basic and acidic residues" evidence="3">
    <location>
        <begin position="284"/>
        <end position="306"/>
    </location>
</feature>
<feature type="active site" description="Tele-phosphohistidine intermediate" evidence="1">
    <location>
        <position position="1004"/>
    </location>
</feature>
<feature type="modified residue" description="N-acetylvaline" evidence="10">
    <location>
        <position position="76"/>
    </location>
</feature>
<feature type="mutagenesis site" description="In sex1-1; induces an excess of starch in leaves after a long period of darkness." evidence="4">
    <original>G</original>
    <variation>E</variation>
    <location>
        <position position="1268"/>
    </location>
</feature>
<protein>
    <recommendedName>
        <fullName evidence="6">Alpha-glucan water dikinase 1, chloroplastic</fullName>
        <ecNumber evidence="4">2.7.9.4</ecNumber>
    </recommendedName>
    <alternativeName>
        <fullName evidence="5">Protein starch excess 1</fullName>
    </alternativeName>
    <alternativeName>
        <fullName evidence="5">Protein starch-related R1</fullName>
    </alternativeName>
</protein>